<protein>
    <recommendedName>
        <fullName evidence="1">UPF0509 protein YciZ</fullName>
    </recommendedName>
</protein>
<organism>
    <name type="scientific">Salmonella choleraesuis (strain SC-B67)</name>
    <dbReference type="NCBI Taxonomy" id="321314"/>
    <lineage>
        <taxon>Bacteria</taxon>
        <taxon>Pseudomonadati</taxon>
        <taxon>Pseudomonadota</taxon>
        <taxon>Gammaproteobacteria</taxon>
        <taxon>Enterobacterales</taxon>
        <taxon>Enterobacteriaceae</taxon>
        <taxon>Salmonella</taxon>
    </lineage>
</organism>
<proteinExistence type="inferred from homology"/>
<feature type="chain" id="PRO_0000312011" description="UPF0509 protein YciZ">
    <location>
        <begin position="1"/>
        <end position="59"/>
    </location>
</feature>
<gene>
    <name evidence="1" type="primary">yciZ</name>
    <name type="ordered locus">SCH_1698</name>
</gene>
<evidence type="ECO:0000255" key="1">
    <source>
        <dbReference type="HAMAP-Rule" id="MF_01641"/>
    </source>
</evidence>
<evidence type="ECO:0000305" key="2"/>
<comment type="similarity">
    <text evidence="1">Belongs to the UPF0509 family.</text>
</comment>
<comment type="sequence caution" evidence="2">
    <conflict type="erroneous initiation">
        <sequence resource="EMBL-CDS" id="AAX65604"/>
    </conflict>
</comment>
<sequence length="59" mass="6430">MSDIEAQRIAARIDTVLDILVAGDYHSAINNLEILRAELLDQVKDGISPSQAPGSPWEI</sequence>
<reference key="1">
    <citation type="journal article" date="2005" name="Nucleic Acids Res.">
        <title>The genome sequence of Salmonella enterica serovar Choleraesuis, a highly invasive and resistant zoonotic pathogen.</title>
        <authorList>
            <person name="Chiu C.-H."/>
            <person name="Tang P."/>
            <person name="Chu C."/>
            <person name="Hu S."/>
            <person name="Bao Q."/>
            <person name="Yu J."/>
            <person name="Chou Y.-Y."/>
            <person name="Wang H.-S."/>
            <person name="Lee Y.-S."/>
        </authorList>
    </citation>
    <scope>NUCLEOTIDE SEQUENCE [LARGE SCALE GENOMIC DNA]</scope>
    <source>
        <strain>SC-B67</strain>
    </source>
</reference>
<name>YCIZ_SALCH</name>
<dbReference type="EMBL" id="AE017220">
    <property type="protein sequence ID" value="AAX65604.1"/>
    <property type="status" value="ALT_INIT"/>
    <property type="molecule type" value="Genomic_DNA"/>
</dbReference>
<dbReference type="RefSeq" id="WP_001279854.1">
    <property type="nucleotide sequence ID" value="NC_006905.1"/>
</dbReference>
<dbReference type="KEGG" id="sec:SCH_1698"/>
<dbReference type="HOGENOM" id="CLU_180697_1_0_6"/>
<dbReference type="Proteomes" id="UP000000538">
    <property type="component" value="Chromosome"/>
</dbReference>
<dbReference type="HAMAP" id="MF_01641">
    <property type="entry name" value="UPF0509"/>
    <property type="match status" value="1"/>
</dbReference>
<dbReference type="InterPro" id="IPR020887">
    <property type="entry name" value="UPF0509"/>
</dbReference>
<dbReference type="NCBIfam" id="NF010179">
    <property type="entry name" value="PRK13658.1"/>
    <property type="match status" value="1"/>
</dbReference>
<dbReference type="Pfam" id="PF23675">
    <property type="entry name" value="YciZ"/>
    <property type="match status" value="1"/>
</dbReference>
<accession>Q57NV7</accession>